<reference key="1">
    <citation type="journal article" date="2004" name="Proc. Natl. Acad. Sci. U.S.A.">
        <title>Genome sequence of the enterobacterial phytopathogen Erwinia carotovora subsp. atroseptica and characterization of virulence factors.</title>
        <authorList>
            <person name="Bell K.S."/>
            <person name="Sebaihia M."/>
            <person name="Pritchard L."/>
            <person name="Holden M.T.G."/>
            <person name="Hyman L.J."/>
            <person name="Holeva M.C."/>
            <person name="Thomson N.R."/>
            <person name="Bentley S.D."/>
            <person name="Churcher L.J.C."/>
            <person name="Mungall K."/>
            <person name="Atkin R."/>
            <person name="Bason N."/>
            <person name="Brooks K."/>
            <person name="Chillingworth T."/>
            <person name="Clark K."/>
            <person name="Doggett J."/>
            <person name="Fraser A."/>
            <person name="Hance Z."/>
            <person name="Hauser H."/>
            <person name="Jagels K."/>
            <person name="Moule S."/>
            <person name="Norbertczak H."/>
            <person name="Ormond D."/>
            <person name="Price C."/>
            <person name="Quail M.A."/>
            <person name="Sanders M."/>
            <person name="Walker D."/>
            <person name="Whitehead S."/>
            <person name="Salmond G.P.C."/>
            <person name="Birch P.R.J."/>
            <person name="Parkhill J."/>
            <person name="Toth I.K."/>
        </authorList>
    </citation>
    <scope>NUCLEOTIDE SEQUENCE [LARGE SCALE GENOMIC DNA]</scope>
    <source>
        <strain>SCRI 1043 / ATCC BAA-672</strain>
    </source>
</reference>
<keyword id="KW-1015">Disulfide bond</keyword>
<keyword id="KW-0378">Hydrolase</keyword>
<keyword id="KW-0479">Metal-binding</keyword>
<keyword id="KW-0482">Metalloprotease</keyword>
<keyword id="KW-0574">Periplasm</keyword>
<keyword id="KW-0645">Protease</keyword>
<keyword id="KW-1185">Reference proteome</keyword>
<keyword id="KW-0732">Signal</keyword>
<keyword id="KW-0862">Zinc</keyword>
<protein>
    <recommendedName>
        <fullName>Penicillin-insensitive murein endopeptidase</fullName>
        <ecNumber>3.4.24.-</ecNumber>
    </recommendedName>
    <alternativeName>
        <fullName>D-alanyl-D-alanine-endopeptidase</fullName>
        <shortName>DD-endopeptidase</shortName>
    </alternativeName>
</protein>
<accession>Q6D2M7</accession>
<dbReference type="EC" id="3.4.24.-"/>
<dbReference type="EMBL" id="BX950851">
    <property type="protein sequence ID" value="CAG75967.1"/>
    <property type="molecule type" value="Genomic_DNA"/>
</dbReference>
<dbReference type="RefSeq" id="WP_011094592.1">
    <property type="nucleotide sequence ID" value="NC_004547.2"/>
</dbReference>
<dbReference type="SMR" id="Q6D2M7"/>
<dbReference type="STRING" id="218491.ECA3068"/>
<dbReference type="MEROPS" id="M74.001"/>
<dbReference type="GeneID" id="57209753"/>
<dbReference type="KEGG" id="eca:ECA3068"/>
<dbReference type="PATRIC" id="fig|218491.5.peg.3101"/>
<dbReference type="eggNOG" id="COG3770">
    <property type="taxonomic scope" value="Bacteria"/>
</dbReference>
<dbReference type="HOGENOM" id="CLU_052496_0_0_6"/>
<dbReference type="OrthoDB" id="1467367at2"/>
<dbReference type="Proteomes" id="UP000007966">
    <property type="component" value="Chromosome"/>
</dbReference>
<dbReference type="GO" id="GO:0030288">
    <property type="term" value="C:outer membrane-bounded periplasmic space"/>
    <property type="evidence" value="ECO:0007669"/>
    <property type="project" value="InterPro"/>
</dbReference>
<dbReference type="GO" id="GO:0046872">
    <property type="term" value="F:metal ion binding"/>
    <property type="evidence" value="ECO:0007669"/>
    <property type="project" value="UniProtKB-KW"/>
</dbReference>
<dbReference type="GO" id="GO:0004222">
    <property type="term" value="F:metalloendopeptidase activity"/>
    <property type="evidence" value="ECO:0007669"/>
    <property type="project" value="UniProtKB-UniRule"/>
</dbReference>
<dbReference type="GO" id="GO:0004252">
    <property type="term" value="F:serine-type endopeptidase activity"/>
    <property type="evidence" value="ECO:0007669"/>
    <property type="project" value="InterPro"/>
</dbReference>
<dbReference type="GO" id="GO:0000270">
    <property type="term" value="P:peptidoglycan metabolic process"/>
    <property type="evidence" value="ECO:0007669"/>
    <property type="project" value="UniProtKB-UniRule"/>
</dbReference>
<dbReference type="GO" id="GO:0006508">
    <property type="term" value="P:proteolysis"/>
    <property type="evidence" value="ECO:0007669"/>
    <property type="project" value="UniProtKB-KW"/>
</dbReference>
<dbReference type="Gene3D" id="3.30.1380.10">
    <property type="match status" value="1"/>
</dbReference>
<dbReference type="HAMAP" id="MF_01623">
    <property type="entry name" value="MepA"/>
    <property type="match status" value="1"/>
</dbReference>
<dbReference type="InterPro" id="IPR009045">
    <property type="entry name" value="Hedgehog_sig/DD-Pept_Zn-bd_sf"/>
</dbReference>
<dbReference type="InterPro" id="IPR005073">
    <property type="entry name" value="Peptidase_M74"/>
</dbReference>
<dbReference type="NCBIfam" id="NF006947">
    <property type="entry name" value="PRK09429.1"/>
    <property type="match status" value="1"/>
</dbReference>
<dbReference type="Pfam" id="PF03411">
    <property type="entry name" value="Peptidase_M74"/>
    <property type="match status" value="1"/>
</dbReference>
<dbReference type="PIRSF" id="PIRSF018455">
    <property type="entry name" value="MepA"/>
    <property type="match status" value="1"/>
</dbReference>
<dbReference type="SUPFAM" id="SSF55166">
    <property type="entry name" value="Hedgehog/DD-peptidase"/>
    <property type="match status" value="1"/>
</dbReference>
<feature type="signal peptide" evidence="2">
    <location>
        <begin position="1"/>
        <end position="24"/>
    </location>
</feature>
<feature type="chain" id="PRO_0000044578" description="Penicillin-insensitive murein endopeptidase">
    <location>
        <begin position="25"/>
        <end position="281"/>
    </location>
</feature>
<feature type="region of interest" description="Disordered" evidence="4">
    <location>
        <begin position="230"/>
        <end position="271"/>
    </location>
</feature>
<feature type="compositionally biased region" description="Polar residues" evidence="4">
    <location>
        <begin position="246"/>
        <end position="255"/>
    </location>
</feature>
<feature type="binding site" evidence="1">
    <location>
        <position position="115"/>
    </location>
    <ligand>
        <name>Zn(2+)</name>
        <dbReference type="ChEBI" id="CHEBI:29105"/>
        <label>1</label>
    </ligand>
</feature>
<feature type="binding site" evidence="1">
    <location>
        <position position="118"/>
    </location>
    <ligand>
        <name>Zn(2+)</name>
        <dbReference type="ChEBI" id="CHEBI:29105"/>
        <label>1</label>
    </ligand>
</feature>
<feature type="binding site" evidence="1">
    <location>
        <position position="125"/>
    </location>
    <ligand>
        <name>Zn(2+)</name>
        <dbReference type="ChEBI" id="CHEBI:29105"/>
        <label>1</label>
    </ligand>
</feature>
<feature type="binding site" evidence="1">
    <location>
        <position position="216"/>
    </location>
    <ligand>
        <name>Zn(2+)</name>
        <dbReference type="ChEBI" id="CHEBI:29105"/>
        <label>1</label>
    </ligand>
</feature>
<feature type="disulfide bond" evidence="1">
    <location>
        <begin position="49"/>
        <end position="270"/>
    </location>
</feature>
<feature type="disulfide bond" evidence="1">
    <location>
        <begin position="192"/>
        <end position="240"/>
    </location>
</feature>
<feature type="disulfide bond" evidence="1">
    <location>
        <begin position="221"/>
        <end position="228"/>
    </location>
</feature>
<name>MEPA_PECAS</name>
<gene>
    <name type="primary">mepA</name>
    <name type="ordered locus">ECA3068</name>
</gene>
<proteinExistence type="inferred from homology"/>
<organism>
    <name type="scientific">Pectobacterium atrosepticum (strain SCRI 1043 / ATCC BAA-672)</name>
    <name type="common">Erwinia carotovora subsp. atroseptica</name>
    <dbReference type="NCBI Taxonomy" id="218491"/>
    <lineage>
        <taxon>Bacteria</taxon>
        <taxon>Pseudomonadati</taxon>
        <taxon>Pseudomonadota</taxon>
        <taxon>Gammaproteobacteria</taxon>
        <taxon>Enterobacterales</taxon>
        <taxon>Pectobacteriaceae</taxon>
        <taxon>Pectobacterium</taxon>
    </lineage>
</organism>
<evidence type="ECO:0000250" key="1"/>
<evidence type="ECO:0000255" key="2"/>
<evidence type="ECO:0000255" key="3">
    <source>
        <dbReference type="HAMAP-Rule" id="MF_01623"/>
    </source>
</evidence>
<evidence type="ECO:0000256" key="4">
    <source>
        <dbReference type="SAM" id="MobiDB-lite"/>
    </source>
</evidence>
<evidence type="ECO:0000305" key="5"/>
<comment type="function">
    <text evidence="3">Murein endopeptidase that cleaves the D-alanyl-meso-2,6-diamino-pimelyl amide bond that connects peptidoglycan strands. Likely plays a role in the removal of murein from the sacculus.</text>
</comment>
<comment type="cofactor">
    <cofactor evidence="1">
        <name>Zn(2+)</name>
        <dbReference type="ChEBI" id="CHEBI:29105"/>
    </cofactor>
    <text evidence="1">Binds 1 zinc ion per subunit in the active site.</text>
</comment>
<comment type="subunit">
    <text evidence="1">Dimer.</text>
</comment>
<comment type="subcellular location">
    <subcellularLocation>
        <location evidence="1">Periplasm</location>
    </subcellularLocation>
</comment>
<comment type="similarity">
    <text evidence="5">Belongs to the peptidase M74 family.</text>
</comment>
<sequence>MKQGLIGVLALALGATLLSSAVWAKTPWQEIAHPVAGTPQSIGSFSNGCIIGAQPLPLQSLDYQVMRVDQRRYFGHPDLLAFIHRLSTEVKRTTSGNVLVGDMGMPVGGRFSSGHASHQSGLDVDIWLQLPRQRWSEQQLLKPQPIDLVNASGLNVNPRVWRPEVTTLIKTAALDSDVTRIFVNPAIKKQLCAEAGHDRDWLRKVRPWFAHRAHMHVRLRCPADSLECQEQSEPPIGDGCGAELTSWFQPKQPSSEAPEKTTPPPLPPSCQALLDRHFAAR</sequence>